<protein>
    <recommendedName>
        <fullName>Protein KHNYN</fullName>
    </recommendedName>
    <alternativeName>
        <fullName>KH and NYN domain-containing protein</fullName>
    </alternativeName>
</protein>
<accession>O15037</accession>
<accession>Q86TZ6</accession>
<accession>Q8IUQ2</accession>
<accession>Q96BA9</accession>
<gene>
    <name type="primary">KHNYN</name>
    <name type="synonym">KIAA0323</name>
</gene>
<sequence length="678" mass="74534">MPTWGARPASPDRFAVSAEAENKVREQQPHVERIFSVGVSVLPKDCPDNPHIWLQLEGPKENASRAKEYLKGLCSPELQDEIHYPPKLHCIFLGAQGFFLDCLAWSTSAHLVPRAPGSLMISGLTEAFVMAQSRVEELAERLSWDFTPGPSSGASQCTGVLRDFSALLQSPGDAHREALLQLPLAVQEELLSLVQEASSGQGPGALASWEGRSSALLGAQCQGVRAPPSDGRESLDTGSMGPGDCRGARGDTYAVEKEGGKQGGPREMDWGWKELPGEEAWEREVALRPQSVGGGARESAPLKGKALGKEEIALGGGGFCVHREPPGAHGSCHRAAQSRGASLLQRLHNGNASPPRVPSPPPAPEPPWHCGDRGDCGDRGDVGDRGDKQQGMARGRGPQWKRGARGGNLVTGTQRFKEALQDPFTLCLANVPGQPDLRHIVIDGSNVAMVHGLQHYFSSRGIAIAVQYFWDRGHRDITVFVPQWRFSKDAKVRESHFLQKLYSLSLLSLTPSRVMDGKRISSYDDRFMVKLAEETDGIIVSNDQFRDLAEESEKWMAIIRERLLPFTFVGNLFMVPDDPLGRNGPTLDEFLKKPARTQGSSKAQHPSRGFAEHGKQQQGREEEKGSGGIRKTRETERLRRQLLEVFWGQDHKVDFILQREPYCRDINQLSEALLSLNF</sequence>
<comment type="interaction">
    <interactant intactId="EBI-6148525">
        <id>O15037</id>
    </interactant>
    <interactant intactId="EBI-716247">
        <id>Q15843</id>
        <label>NEDD8</label>
    </interactant>
    <organismsDiffer>false</organismsDiffer>
    <experiments>13</experiments>
</comment>
<comment type="interaction">
    <interactant intactId="EBI-6148525">
        <id>O15037</id>
    </interactant>
    <interactant intactId="EBI-741582">
        <id>O60568</id>
        <label>PLOD3</label>
    </interactant>
    <organismsDiffer>false</organismsDiffer>
    <experiments>3</experiments>
</comment>
<comment type="interaction">
    <interactant intactId="EBI-6148525">
        <id>O15037</id>
    </interactant>
    <interactant intactId="EBI-723313">
        <id>Q9NWF9</id>
        <label>RNF216</label>
    </interactant>
    <organismsDiffer>false</organismsDiffer>
    <experiments>3</experiments>
</comment>
<comment type="interaction">
    <interactant intactId="EBI-6148525">
        <id>O15037</id>
    </interactant>
    <interactant intactId="EBI-11139477">
        <id>Q96N21</id>
        <label>TEPSIN</label>
    </interactant>
    <organismsDiffer>false</organismsDiffer>
    <experiments>3</experiments>
</comment>
<comment type="similarity">
    <text evidence="5">Belongs to the N4BP1 family.</text>
</comment>
<comment type="sequence caution" evidence="5">
    <conflict type="erroneous initiation">
        <sequence resource="EMBL-CDS" id="BAA20781"/>
    </conflict>
    <text>Extended N-terminus.</text>
</comment>
<feature type="chain" id="PRO_0000084290" description="Protein KHNYN">
    <location>
        <begin position="1"/>
        <end position="678"/>
    </location>
</feature>
<feature type="domain" description="RNase NYN" evidence="1">
    <location>
        <begin position="437"/>
        <end position="589"/>
    </location>
</feature>
<feature type="region of interest" description="Disordered" evidence="2">
    <location>
        <begin position="222"/>
        <end position="251"/>
    </location>
</feature>
<feature type="region of interest" description="Disordered" evidence="2">
    <location>
        <begin position="347"/>
        <end position="407"/>
    </location>
</feature>
<feature type="region of interest" description="Disordered" evidence="2">
    <location>
        <begin position="595"/>
        <end position="633"/>
    </location>
</feature>
<feature type="compositionally biased region" description="Pro residues" evidence="2">
    <location>
        <begin position="355"/>
        <end position="367"/>
    </location>
</feature>
<feature type="compositionally biased region" description="Basic and acidic residues" evidence="2">
    <location>
        <begin position="370"/>
        <end position="388"/>
    </location>
</feature>
<feature type="compositionally biased region" description="Basic and acidic residues" evidence="2">
    <location>
        <begin position="610"/>
        <end position="633"/>
    </location>
</feature>
<feature type="modified residue" description="Phosphoserine" evidence="6">
    <location>
        <position position="10"/>
    </location>
</feature>
<feature type="modified residue" description="Phosphoserine" evidence="7">
    <location>
        <position position="359"/>
    </location>
</feature>
<feature type="sequence variant" id="VAR_030843" description="In dbSNP:rs3742520." evidence="4">
    <original>K</original>
    <variation>T</variation>
    <location>
        <position position="261"/>
    </location>
</feature>
<feature type="sequence variant" id="VAR_030844" description="In dbSNP:rs7151995." evidence="3 4">
    <original>W</original>
    <variation>L</variation>
    <location>
        <position position="270"/>
    </location>
</feature>
<feature type="helix" evidence="8">
    <location>
        <begin position="632"/>
        <end position="640"/>
    </location>
</feature>
<feature type="turn" evidence="8">
    <location>
        <begin position="646"/>
        <end position="651"/>
    </location>
</feature>
<feature type="helix" evidence="8">
    <location>
        <begin position="652"/>
        <end position="658"/>
    </location>
</feature>
<feature type="helix" evidence="8">
    <location>
        <begin position="662"/>
        <end position="677"/>
    </location>
</feature>
<dbReference type="EMBL" id="AB002321">
    <property type="protein sequence ID" value="BAA20781.1"/>
    <property type="status" value="ALT_INIT"/>
    <property type="molecule type" value="mRNA"/>
</dbReference>
<dbReference type="EMBL" id="BX161465">
    <property type="protein sequence ID" value="CAD61924.1"/>
    <property type="molecule type" value="mRNA"/>
</dbReference>
<dbReference type="EMBL" id="AL132800">
    <property type="status" value="NOT_ANNOTATED_CDS"/>
    <property type="molecule type" value="Genomic_DNA"/>
</dbReference>
<dbReference type="EMBL" id="BC015780">
    <property type="protein sequence ID" value="AAH15780.1"/>
    <property type="molecule type" value="mRNA"/>
</dbReference>
<dbReference type="EMBL" id="BC042554">
    <property type="protein sequence ID" value="AAH42554.1"/>
    <property type="molecule type" value="mRNA"/>
</dbReference>
<dbReference type="CCDS" id="CCDS32058.1"/>
<dbReference type="RefSeq" id="NP_001277185.1">
    <property type="nucleotide sequence ID" value="NM_001290256.1"/>
</dbReference>
<dbReference type="RefSeq" id="NP_001277186.1">
    <property type="nucleotide sequence ID" value="NM_001290257.2"/>
</dbReference>
<dbReference type="RefSeq" id="NP_056114.1">
    <property type="nucleotide sequence ID" value="NM_015299.3"/>
</dbReference>
<dbReference type="RefSeq" id="XP_005267531.1">
    <property type="nucleotide sequence ID" value="XM_005267474.6"/>
</dbReference>
<dbReference type="PDB" id="2N5M">
    <property type="method" value="NMR"/>
    <property type="chains" value="A=627-678"/>
</dbReference>
<dbReference type="PDB" id="2N7K">
    <property type="method" value="NMR"/>
    <property type="chains" value="B=627-678"/>
</dbReference>
<dbReference type="PDB" id="8WZC">
    <property type="method" value="X-ray"/>
    <property type="resolution" value="1.93 A"/>
    <property type="chains" value="A=436-595"/>
</dbReference>
<dbReference type="PDB" id="9BGL">
    <property type="method" value="X-ray"/>
    <property type="resolution" value="2.29 A"/>
    <property type="chains" value="B=627-678"/>
</dbReference>
<dbReference type="PDB" id="9CS9">
    <property type="method" value="X-ray"/>
    <property type="resolution" value="2.50 A"/>
    <property type="chains" value="A/B=12-197"/>
</dbReference>
<dbReference type="PDB" id="9HTS">
    <property type="method" value="X-ray"/>
    <property type="resolution" value="2.20 A"/>
    <property type="chains" value="A/B=8-200"/>
</dbReference>
<dbReference type="PDBsum" id="2N5M"/>
<dbReference type="PDBsum" id="2N7K"/>
<dbReference type="PDBsum" id="8WZC"/>
<dbReference type="PDBsum" id="9BGL"/>
<dbReference type="PDBsum" id="9CS9"/>
<dbReference type="PDBsum" id="9HTS"/>
<dbReference type="SMR" id="O15037"/>
<dbReference type="BioGRID" id="116933">
    <property type="interactions" value="23"/>
</dbReference>
<dbReference type="FunCoup" id="O15037">
    <property type="interactions" value="632"/>
</dbReference>
<dbReference type="IntAct" id="O15037">
    <property type="interactions" value="15"/>
</dbReference>
<dbReference type="MINT" id="O15037"/>
<dbReference type="STRING" id="9606.ENSP00000450799"/>
<dbReference type="iPTMnet" id="O15037"/>
<dbReference type="MetOSite" id="O15037"/>
<dbReference type="PhosphoSitePlus" id="O15037"/>
<dbReference type="BioMuta" id="KHNYN"/>
<dbReference type="jPOST" id="O15037"/>
<dbReference type="MassIVE" id="O15037"/>
<dbReference type="PaxDb" id="9606-ENSP00000251343"/>
<dbReference type="PeptideAtlas" id="O15037"/>
<dbReference type="ProteomicsDB" id="48394"/>
<dbReference type="Pumba" id="O15037"/>
<dbReference type="Antibodypedia" id="186">
    <property type="antibodies" value="73 antibodies from 15 providers"/>
</dbReference>
<dbReference type="DNASU" id="23351"/>
<dbReference type="Ensembl" id="ENST00000251343.9">
    <property type="protein sequence ID" value="ENSP00000251343.5"/>
    <property type="gene ID" value="ENSG00000100441.10"/>
</dbReference>
<dbReference type="Ensembl" id="ENST00000553935.6">
    <property type="protein sequence ID" value="ENSP00000450799.1"/>
    <property type="gene ID" value="ENSG00000100441.10"/>
</dbReference>
<dbReference type="Ensembl" id="ENST00000556842.5">
    <property type="protein sequence ID" value="ENSP00000451106.1"/>
    <property type="gene ID" value="ENSG00000100441.10"/>
</dbReference>
<dbReference type="GeneID" id="23351"/>
<dbReference type="KEGG" id="hsa:23351"/>
<dbReference type="MANE-Select" id="ENST00000553935.6">
    <property type="protein sequence ID" value="ENSP00000450799.1"/>
    <property type="RefSeq nucleotide sequence ID" value="NM_015299.3"/>
    <property type="RefSeq protein sequence ID" value="NP_056114.1"/>
</dbReference>
<dbReference type="UCSC" id="uc001wph.5">
    <property type="organism name" value="human"/>
</dbReference>
<dbReference type="AGR" id="HGNC:20166"/>
<dbReference type="CTD" id="23351"/>
<dbReference type="DisGeNET" id="23351"/>
<dbReference type="GeneCards" id="KHNYN"/>
<dbReference type="HGNC" id="HGNC:20166">
    <property type="gene designation" value="KHNYN"/>
</dbReference>
<dbReference type="HPA" id="ENSG00000100441">
    <property type="expression patterns" value="Low tissue specificity"/>
</dbReference>
<dbReference type="MIM" id="619579">
    <property type="type" value="gene"/>
</dbReference>
<dbReference type="neXtProt" id="NX_O15037"/>
<dbReference type="OpenTargets" id="ENSG00000100441"/>
<dbReference type="PharmGKB" id="PA165479143"/>
<dbReference type="VEuPathDB" id="HostDB:ENSG00000100441"/>
<dbReference type="eggNOG" id="KOG3777">
    <property type="taxonomic scope" value="Eukaryota"/>
</dbReference>
<dbReference type="GeneTree" id="ENSGT00940000161993"/>
<dbReference type="HOGENOM" id="CLU_014137_0_0_1"/>
<dbReference type="InParanoid" id="O15037"/>
<dbReference type="OMA" id="SCGYTEQ"/>
<dbReference type="OrthoDB" id="392925at2759"/>
<dbReference type="PAN-GO" id="O15037">
    <property type="GO annotations" value="5 GO annotations based on evolutionary models"/>
</dbReference>
<dbReference type="PhylomeDB" id="O15037"/>
<dbReference type="TreeFam" id="TF315783"/>
<dbReference type="PathwayCommons" id="O15037"/>
<dbReference type="SignaLink" id="O15037"/>
<dbReference type="BioGRID-ORCS" id="23351">
    <property type="hits" value="13 hits in 1155 CRISPR screens"/>
</dbReference>
<dbReference type="ChiTaRS" id="KHNYN">
    <property type="organism name" value="human"/>
</dbReference>
<dbReference type="GenomeRNAi" id="23351"/>
<dbReference type="Pharos" id="O15037">
    <property type="development level" value="Tdark"/>
</dbReference>
<dbReference type="PRO" id="PR:O15037"/>
<dbReference type="Proteomes" id="UP000005640">
    <property type="component" value="Chromosome 14"/>
</dbReference>
<dbReference type="RNAct" id="O15037">
    <property type="molecule type" value="protein"/>
</dbReference>
<dbReference type="Bgee" id="ENSG00000100441">
    <property type="expression patterns" value="Expressed in left ovary and 182 other cell types or tissues"/>
</dbReference>
<dbReference type="ExpressionAtlas" id="O15037">
    <property type="expression patterns" value="baseline and differential"/>
</dbReference>
<dbReference type="GO" id="GO:0036464">
    <property type="term" value="C:cytoplasmic ribonucleoprotein granule"/>
    <property type="evidence" value="ECO:0000318"/>
    <property type="project" value="GO_Central"/>
</dbReference>
<dbReference type="GO" id="GO:0005634">
    <property type="term" value="C:nucleus"/>
    <property type="evidence" value="ECO:0000318"/>
    <property type="project" value="GO_Central"/>
</dbReference>
<dbReference type="GO" id="GO:0003729">
    <property type="term" value="F:mRNA binding"/>
    <property type="evidence" value="ECO:0000318"/>
    <property type="project" value="GO_Central"/>
</dbReference>
<dbReference type="GO" id="GO:0004521">
    <property type="term" value="F:RNA endonuclease activity"/>
    <property type="evidence" value="ECO:0000318"/>
    <property type="project" value="GO_Central"/>
</dbReference>
<dbReference type="CDD" id="cd09032">
    <property type="entry name" value="KH-I_N4BP1_like_rpt1"/>
    <property type="match status" value="1"/>
</dbReference>
<dbReference type="CDD" id="cd22477">
    <property type="entry name" value="KH-I_NYNRIN_like"/>
    <property type="match status" value="1"/>
</dbReference>
<dbReference type="CDD" id="cd18728">
    <property type="entry name" value="PIN_N4BP1-like"/>
    <property type="match status" value="1"/>
</dbReference>
<dbReference type="FunFam" id="3.40.50.11980:FF:000001">
    <property type="entry name" value="ZC3H12A isoform 1"/>
    <property type="match status" value="1"/>
</dbReference>
<dbReference type="Gene3D" id="3.40.50.11980">
    <property type="match status" value="1"/>
</dbReference>
<dbReference type="InterPro" id="IPR036612">
    <property type="entry name" value="KH_dom_type_1_sf"/>
</dbReference>
<dbReference type="InterPro" id="IPR056629">
    <property type="entry name" value="KH_N4BP1_1st"/>
</dbReference>
<dbReference type="InterPro" id="IPR056630">
    <property type="entry name" value="KH_N4BP1_2nd"/>
</dbReference>
<dbReference type="InterPro" id="IPR021869">
    <property type="entry name" value="RNase_Zc3h12_NYN"/>
</dbReference>
<dbReference type="InterPro" id="IPR056578">
    <property type="entry name" value="UBA_N4BP1_C"/>
</dbReference>
<dbReference type="InterPro" id="IPR051101">
    <property type="entry name" value="ZC3H12/N4BP1_RNase_Reg"/>
</dbReference>
<dbReference type="PANTHER" id="PTHR12876">
    <property type="entry name" value="N4BP1-RELATED"/>
    <property type="match status" value="1"/>
</dbReference>
<dbReference type="PANTHER" id="PTHR12876:SF28">
    <property type="entry name" value="PROTEIN KHNYN"/>
    <property type="match status" value="1"/>
</dbReference>
<dbReference type="Pfam" id="PF23050">
    <property type="entry name" value="KH_N4BP1_1st"/>
    <property type="match status" value="1"/>
</dbReference>
<dbReference type="Pfam" id="PF23052">
    <property type="entry name" value="KH_N4BP1_2nd"/>
    <property type="match status" value="1"/>
</dbReference>
<dbReference type="Pfam" id="PF11977">
    <property type="entry name" value="RNase_Zc3h12a"/>
    <property type="match status" value="1"/>
</dbReference>
<dbReference type="Pfam" id="PF23054">
    <property type="entry name" value="UBA_N4BP1_C"/>
    <property type="match status" value="1"/>
</dbReference>
<dbReference type="SUPFAM" id="SSF54791">
    <property type="entry name" value="Eukaryotic type KH-domain (KH-domain type I)"/>
    <property type="match status" value="1"/>
</dbReference>
<name>KHNYN_HUMAN</name>
<evidence type="ECO:0000255" key="1"/>
<evidence type="ECO:0000256" key="2">
    <source>
        <dbReference type="SAM" id="MobiDB-lite"/>
    </source>
</evidence>
<evidence type="ECO:0000269" key="3">
    <source>
    </source>
</evidence>
<evidence type="ECO:0000269" key="4">
    <source>
    </source>
</evidence>
<evidence type="ECO:0000305" key="5"/>
<evidence type="ECO:0007744" key="6">
    <source>
    </source>
</evidence>
<evidence type="ECO:0007744" key="7">
    <source>
    </source>
</evidence>
<evidence type="ECO:0007829" key="8">
    <source>
        <dbReference type="PDB" id="2N5M"/>
    </source>
</evidence>
<keyword id="KW-0002">3D-structure</keyword>
<keyword id="KW-0597">Phosphoprotein</keyword>
<keyword id="KW-1267">Proteomics identification</keyword>
<keyword id="KW-1185">Reference proteome</keyword>
<proteinExistence type="evidence at protein level"/>
<reference key="1">
    <citation type="journal article" date="1997" name="DNA Res.">
        <title>Prediction of the coding sequences of unidentified human genes. VII. The complete sequences of 100 new cDNA clones from brain which can code for large proteins in vitro.</title>
        <authorList>
            <person name="Nagase T."/>
            <person name="Ishikawa K."/>
            <person name="Nakajima D."/>
            <person name="Ohira M."/>
            <person name="Seki N."/>
            <person name="Miyajima N."/>
            <person name="Tanaka A."/>
            <person name="Kotani H."/>
            <person name="Nomura N."/>
            <person name="Ohara O."/>
        </authorList>
    </citation>
    <scope>NUCLEOTIDE SEQUENCE [LARGE SCALE MRNA]</scope>
    <scope>VARIANTS THR-261 AND LEU-270</scope>
    <source>
        <tissue>Brain</tissue>
    </source>
</reference>
<reference key="2">
    <citation type="submission" date="2003-01" db="EMBL/GenBank/DDBJ databases">
        <title>Full-length cDNA libraries and normalization.</title>
        <authorList>
            <person name="Li W.B."/>
            <person name="Gruber C."/>
            <person name="Jessee J."/>
            <person name="Polayes D."/>
        </authorList>
    </citation>
    <scope>NUCLEOTIDE SEQUENCE [LARGE SCALE MRNA]</scope>
    <source>
        <tissue>Placenta</tissue>
    </source>
</reference>
<reference key="3">
    <citation type="journal article" date="2003" name="Nature">
        <title>The DNA sequence and analysis of human chromosome 14.</title>
        <authorList>
            <person name="Heilig R."/>
            <person name="Eckenberg R."/>
            <person name="Petit J.-L."/>
            <person name="Fonknechten N."/>
            <person name="Da Silva C."/>
            <person name="Cattolico L."/>
            <person name="Levy M."/>
            <person name="Barbe V."/>
            <person name="De Berardinis V."/>
            <person name="Ureta-Vidal A."/>
            <person name="Pelletier E."/>
            <person name="Vico V."/>
            <person name="Anthouard V."/>
            <person name="Rowen L."/>
            <person name="Madan A."/>
            <person name="Qin S."/>
            <person name="Sun H."/>
            <person name="Du H."/>
            <person name="Pepin K."/>
            <person name="Artiguenave F."/>
            <person name="Robert C."/>
            <person name="Cruaud C."/>
            <person name="Bruels T."/>
            <person name="Jaillon O."/>
            <person name="Friedlander L."/>
            <person name="Samson G."/>
            <person name="Brottier P."/>
            <person name="Cure S."/>
            <person name="Segurens B."/>
            <person name="Aniere F."/>
            <person name="Samain S."/>
            <person name="Crespeau H."/>
            <person name="Abbasi N."/>
            <person name="Aiach N."/>
            <person name="Boscus D."/>
            <person name="Dickhoff R."/>
            <person name="Dors M."/>
            <person name="Dubois I."/>
            <person name="Friedman C."/>
            <person name="Gouyvenoux M."/>
            <person name="James R."/>
            <person name="Madan A."/>
            <person name="Mairey-Estrada B."/>
            <person name="Mangenot S."/>
            <person name="Martins N."/>
            <person name="Menard M."/>
            <person name="Oztas S."/>
            <person name="Ratcliffe A."/>
            <person name="Shaffer T."/>
            <person name="Trask B."/>
            <person name="Vacherie B."/>
            <person name="Bellemere C."/>
            <person name="Belser C."/>
            <person name="Besnard-Gonnet M."/>
            <person name="Bartol-Mavel D."/>
            <person name="Boutard M."/>
            <person name="Briez-Silla S."/>
            <person name="Combette S."/>
            <person name="Dufosse-Laurent V."/>
            <person name="Ferron C."/>
            <person name="Lechaplais C."/>
            <person name="Louesse C."/>
            <person name="Muselet D."/>
            <person name="Magdelenat G."/>
            <person name="Pateau E."/>
            <person name="Petit E."/>
            <person name="Sirvain-Trukniewicz P."/>
            <person name="Trybou A."/>
            <person name="Vega-Czarny N."/>
            <person name="Bataille E."/>
            <person name="Bluet E."/>
            <person name="Bordelais I."/>
            <person name="Dubois M."/>
            <person name="Dumont C."/>
            <person name="Guerin T."/>
            <person name="Haffray S."/>
            <person name="Hammadi R."/>
            <person name="Muanga J."/>
            <person name="Pellouin V."/>
            <person name="Robert D."/>
            <person name="Wunderle E."/>
            <person name="Gauguet G."/>
            <person name="Roy A."/>
            <person name="Sainte-Marthe L."/>
            <person name="Verdier J."/>
            <person name="Verdier-Discala C."/>
            <person name="Hillier L.W."/>
            <person name="Fulton L."/>
            <person name="McPherson J."/>
            <person name="Matsuda F."/>
            <person name="Wilson R."/>
            <person name="Scarpelli C."/>
            <person name="Gyapay G."/>
            <person name="Wincker P."/>
            <person name="Saurin W."/>
            <person name="Quetier F."/>
            <person name="Waterston R."/>
            <person name="Hood L."/>
            <person name="Weissenbach J."/>
        </authorList>
    </citation>
    <scope>NUCLEOTIDE SEQUENCE [LARGE SCALE GENOMIC DNA]</scope>
</reference>
<reference key="4">
    <citation type="journal article" date="2004" name="Genome Res.">
        <title>The status, quality, and expansion of the NIH full-length cDNA project: the Mammalian Gene Collection (MGC).</title>
        <authorList>
            <consortium name="The MGC Project Team"/>
        </authorList>
    </citation>
    <scope>NUCLEOTIDE SEQUENCE [LARGE SCALE MRNA]</scope>
    <scope>VARIANT LEU-270</scope>
    <source>
        <tissue>Brain</tissue>
        <tissue>Colon</tissue>
    </source>
</reference>
<reference key="5">
    <citation type="journal article" date="2013" name="J. Proteome Res.">
        <title>Toward a comprehensive characterization of a human cancer cell phosphoproteome.</title>
        <authorList>
            <person name="Zhou H."/>
            <person name="Di Palma S."/>
            <person name="Preisinger C."/>
            <person name="Peng M."/>
            <person name="Polat A.N."/>
            <person name="Heck A.J."/>
            <person name="Mohammed S."/>
        </authorList>
    </citation>
    <scope>PHOSPHORYLATION [LARGE SCALE ANALYSIS] AT SER-10</scope>
    <scope>IDENTIFICATION BY MASS SPECTROMETRY [LARGE SCALE ANALYSIS]</scope>
    <source>
        <tissue>Erythroleukemia</tissue>
    </source>
</reference>
<reference key="6">
    <citation type="journal article" date="2014" name="J. Proteomics">
        <title>An enzyme assisted RP-RPLC approach for in-depth analysis of human liver phosphoproteome.</title>
        <authorList>
            <person name="Bian Y."/>
            <person name="Song C."/>
            <person name="Cheng K."/>
            <person name="Dong M."/>
            <person name="Wang F."/>
            <person name="Huang J."/>
            <person name="Sun D."/>
            <person name="Wang L."/>
            <person name="Ye M."/>
            <person name="Zou H."/>
        </authorList>
    </citation>
    <scope>PHOSPHORYLATION [LARGE SCALE ANALYSIS] AT SER-359</scope>
    <scope>IDENTIFICATION BY MASS SPECTROMETRY [LARGE SCALE ANALYSIS]</scope>
    <source>
        <tissue>Liver</tissue>
    </source>
</reference>
<organism>
    <name type="scientific">Homo sapiens</name>
    <name type="common">Human</name>
    <dbReference type="NCBI Taxonomy" id="9606"/>
    <lineage>
        <taxon>Eukaryota</taxon>
        <taxon>Metazoa</taxon>
        <taxon>Chordata</taxon>
        <taxon>Craniata</taxon>
        <taxon>Vertebrata</taxon>
        <taxon>Euteleostomi</taxon>
        <taxon>Mammalia</taxon>
        <taxon>Eutheria</taxon>
        <taxon>Euarchontoglires</taxon>
        <taxon>Primates</taxon>
        <taxon>Haplorrhini</taxon>
        <taxon>Catarrhini</taxon>
        <taxon>Hominidae</taxon>
        <taxon>Homo</taxon>
    </lineage>
</organism>